<protein>
    <recommendedName>
        <fullName evidence="1">UDP-N-acetylmuramate--L-alanine ligase</fullName>
        <ecNumber evidence="1">6.3.2.8</ecNumber>
    </recommendedName>
    <alternativeName>
        <fullName evidence="1">UDP-N-acetylmuramoyl-L-alanine synthetase</fullName>
    </alternativeName>
</protein>
<feature type="chain" id="PRO_1000057315" description="UDP-N-acetylmuramate--L-alanine ligase">
    <location>
        <begin position="1"/>
        <end position="491"/>
    </location>
</feature>
<feature type="binding site" evidence="1">
    <location>
        <begin position="126"/>
        <end position="132"/>
    </location>
    <ligand>
        <name>ATP</name>
        <dbReference type="ChEBI" id="CHEBI:30616"/>
    </ligand>
</feature>
<evidence type="ECO:0000255" key="1">
    <source>
        <dbReference type="HAMAP-Rule" id="MF_00046"/>
    </source>
</evidence>
<dbReference type="EC" id="6.3.2.8" evidence="1"/>
<dbReference type="EMBL" id="CP000800">
    <property type="protein sequence ID" value="ABV16600.1"/>
    <property type="molecule type" value="Genomic_DNA"/>
</dbReference>
<dbReference type="RefSeq" id="WP_001096048.1">
    <property type="nucleotide sequence ID" value="NC_009801.1"/>
</dbReference>
<dbReference type="SMR" id="A7ZHI2"/>
<dbReference type="GeneID" id="75169991"/>
<dbReference type="KEGG" id="ecw:EcE24377A_0093"/>
<dbReference type="HOGENOM" id="CLU_028104_2_2_6"/>
<dbReference type="UniPathway" id="UPA00219"/>
<dbReference type="Proteomes" id="UP000001122">
    <property type="component" value="Chromosome"/>
</dbReference>
<dbReference type="GO" id="GO:0005737">
    <property type="term" value="C:cytoplasm"/>
    <property type="evidence" value="ECO:0007669"/>
    <property type="project" value="UniProtKB-SubCell"/>
</dbReference>
<dbReference type="GO" id="GO:0005524">
    <property type="term" value="F:ATP binding"/>
    <property type="evidence" value="ECO:0007669"/>
    <property type="project" value="UniProtKB-UniRule"/>
</dbReference>
<dbReference type="GO" id="GO:0008763">
    <property type="term" value="F:UDP-N-acetylmuramate-L-alanine ligase activity"/>
    <property type="evidence" value="ECO:0007669"/>
    <property type="project" value="UniProtKB-UniRule"/>
</dbReference>
<dbReference type="GO" id="GO:0051301">
    <property type="term" value="P:cell division"/>
    <property type="evidence" value="ECO:0007669"/>
    <property type="project" value="UniProtKB-KW"/>
</dbReference>
<dbReference type="GO" id="GO:0071555">
    <property type="term" value="P:cell wall organization"/>
    <property type="evidence" value="ECO:0007669"/>
    <property type="project" value="UniProtKB-KW"/>
</dbReference>
<dbReference type="GO" id="GO:0009252">
    <property type="term" value="P:peptidoglycan biosynthetic process"/>
    <property type="evidence" value="ECO:0007669"/>
    <property type="project" value="UniProtKB-UniRule"/>
</dbReference>
<dbReference type="GO" id="GO:0008360">
    <property type="term" value="P:regulation of cell shape"/>
    <property type="evidence" value="ECO:0007669"/>
    <property type="project" value="UniProtKB-KW"/>
</dbReference>
<dbReference type="FunFam" id="3.40.1190.10:FF:000001">
    <property type="entry name" value="UDP-N-acetylmuramate--L-alanine ligase"/>
    <property type="match status" value="1"/>
</dbReference>
<dbReference type="FunFam" id="3.40.50.720:FF:000046">
    <property type="entry name" value="UDP-N-acetylmuramate--L-alanine ligase"/>
    <property type="match status" value="1"/>
</dbReference>
<dbReference type="FunFam" id="3.90.190.20:FF:000001">
    <property type="entry name" value="UDP-N-acetylmuramate--L-alanine ligase"/>
    <property type="match status" value="1"/>
</dbReference>
<dbReference type="Gene3D" id="3.90.190.20">
    <property type="entry name" value="Mur ligase, C-terminal domain"/>
    <property type="match status" value="1"/>
</dbReference>
<dbReference type="Gene3D" id="3.40.1190.10">
    <property type="entry name" value="Mur-like, catalytic domain"/>
    <property type="match status" value="1"/>
</dbReference>
<dbReference type="Gene3D" id="3.40.50.720">
    <property type="entry name" value="NAD(P)-binding Rossmann-like Domain"/>
    <property type="match status" value="1"/>
</dbReference>
<dbReference type="HAMAP" id="MF_00046">
    <property type="entry name" value="MurC"/>
    <property type="match status" value="1"/>
</dbReference>
<dbReference type="InterPro" id="IPR036565">
    <property type="entry name" value="Mur-like_cat_sf"/>
</dbReference>
<dbReference type="InterPro" id="IPR004101">
    <property type="entry name" value="Mur_ligase_C"/>
</dbReference>
<dbReference type="InterPro" id="IPR036615">
    <property type="entry name" value="Mur_ligase_C_dom_sf"/>
</dbReference>
<dbReference type="InterPro" id="IPR013221">
    <property type="entry name" value="Mur_ligase_cen"/>
</dbReference>
<dbReference type="InterPro" id="IPR000713">
    <property type="entry name" value="Mur_ligase_N"/>
</dbReference>
<dbReference type="InterPro" id="IPR050061">
    <property type="entry name" value="MurCDEF_pg_biosynth"/>
</dbReference>
<dbReference type="InterPro" id="IPR005758">
    <property type="entry name" value="UDP-N-AcMur_Ala_ligase_MurC"/>
</dbReference>
<dbReference type="NCBIfam" id="TIGR01082">
    <property type="entry name" value="murC"/>
    <property type="match status" value="1"/>
</dbReference>
<dbReference type="PANTHER" id="PTHR43445:SF3">
    <property type="entry name" value="UDP-N-ACETYLMURAMATE--L-ALANINE LIGASE"/>
    <property type="match status" value="1"/>
</dbReference>
<dbReference type="PANTHER" id="PTHR43445">
    <property type="entry name" value="UDP-N-ACETYLMURAMATE--L-ALANINE LIGASE-RELATED"/>
    <property type="match status" value="1"/>
</dbReference>
<dbReference type="Pfam" id="PF01225">
    <property type="entry name" value="Mur_ligase"/>
    <property type="match status" value="1"/>
</dbReference>
<dbReference type="Pfam" id="PF02875">
    <property type="entry name" value="Mur_ligase_C"/>
    <property type="match status" value="1"/>
</dbReference>
<dbReference type="Pfam" id="PF08245">
    <property type="entry name" value="Mur_ligase_M"/>
    <property type="match status" value="1"/>
</dbReference>
<dbReference type="SUPFAM" id="SSF51984">
    <property type="entry name" value="MurCD N-terminal domain"/>
    <property type="match status" value="1"/>
</dbReference>
<dbReference type="SUPFAM" id="SSF53623">
    <property type="entry name" value="MurD-like peptide ligases, catalytic domain"/>
    <property type="match status" value="1"/>
</dbReference>
<dbReference type="SUPFAM" id="SSF53244">
    <property type="entry name" value="MurD-like peptide ligases, peptide-binding domain"/>
    <property type="match status" value="1"/>
</dbReference>
<sequence length="491" mass="53598">MNTQQLAKLRSIVPEMRRVRHIHFVGIGGAGMGGIAEVLANEGYQISGSDLAPNPVTQQLMNLGATIYFNHRPENVRDASVVVVSSAISADNPEIVAAHEARIPVIRRAEMLAELMRFRHGIAIAGTHGKTTTTAMVSSIYAEAGLDPTFVNGGLVKAAGVHARLGHGRYLIAEADESDASFLHLQPMVAIVTNIEADHMDTYQGDFENLKQTFINFLHNLPFYGRAVMCVDDPVIRELLPRVGRQTTTYGFSEDADVRVEDYQQIGPQGHFTLLRQDKEPMRVTLNAPGRHNALNAAAAVAVATEEGIDDEAILRALESFQGTGRRFDFLGEFPLEPVNGKSGTAMLVDDYGHHPTEVDATIKAARAGWPDKNLVMLFQPHRFTRTRDLYDDFANVLTQVDTLLMLEVYPAGEAPIPGADSRSLCRTIRGRGKIDPILVPDPAQVAEMLAPVLTGNDLILVQGAGNIGKIARSLAEIKLKPQTPEEEQHD</sequence>
<comment type="function">
    <text evidence="1">Cell wall formation.</text>
</comment>
<comment type="catalytic activity">
    <reaction evidence="1">
        <text>UDP-N-acetyl-alpha-D-muramate + L-alanine + ATP = UDP-N-acetyl-alpha-D-muramoyl-L-alanine + ADP + phosphate + H(+)</text>
        <dbReference type="Rhea" id="RHEA:23372"/>
        <dbReference type="ChEBI" id="CHEBI:15378"/>
        <dbReference type="ChEBI" id="CHEBI:30616"/>
        <dbReference type="ChEBI" id="CHEBI:43474"/>
        <dbReference type="ChEBI" id="CHEBI:57972"/>
        <dbReference type="ChEBI" id="CHEBI:70757"/>
        <dbReference type="ChEBI" id="CHEBI:83898"/>
        <dbReference type="ChEBI" id="CHEBI:456216"/>
        <dbReference type="EC" id="6.3.2.8"/>
    </reaction>
</comment>
<comment type="pathway">
    <text evidence="1">Cell wall biogenesis; peptidoglycan biosynthesis.</text>
</comment>
<comment type="subcellular location">
    <subcellularLocation>
        <location evidence="1">Cytoplasm</location>
    </subcellularLocation>
</comment>
<comment type="similarity">
    <text evidence="1">Belongs to the MurCDEF family.</text>
</comment>
<keyword id="KW-0067">ATP-binding</keyword>
<keyword id="KW-0131">Cell cycle</keyword>
<keyword id="KW-0132">Cell division</keyword>
<keyword id="KW-0133">Cell shape</keyword>
<keyword id="KW-0961">Cell wall biogenesis/degradation</keyword>
<keyword id="KW-0963">Cytoplasm</keyword>
<keyword id="KW-0436">Ligase</keyword>
<keyword id="KW-0547">Nucleotide-binding</keyword>
<keyword id="KW-0573">Peptidoglycan synthesis</keyword>
<keyword id="KW-1185">Reference proteome</keyword>
<proteinExistence type="inferred from homology"/>
<gene>
    <name evidence="1" type="primary">murC</name>
    <name type="ordered locus">EcE24377A_0093</name>
</gene>
<organism>
    <name type="scientific">Escherichia coli O139:H28 (strain E24377A / ETEC)</name>
    <dbReference type="NCBI Taxonomy" id="331111"/>
    <lineage>
        <taxon>Bacteria</taxon>
        <taxon>Pseudomonadati</taxon>
        <taxon>Pseudomonadota</taxon>
        <taxon>Gammaproteobacteria</taxon>
        <taxon>Enterobacterales</taxon>
        <taxon>Enterobacteriaceae</taxon>
        <taxon>Escherichia</taxon>
    </lineage>
</organism>
<name>MURC_ECO24</name>
<accession>A7ZHI2</accession>
<reference key="1">
    <citation type="journal article" date="2008" name="J. Bacteriol.">
        <title>The pangenome structure of Escherichia coli: comparative genomic analysis of E. coli commensal and pathogenic isolates.</title>
        <authorList>
            <person name="Rasko D.A."/>
            <person name="Rosovitz M.J."/>
            <person name="Myers G.S.A."/>
            <person name="Mongodin E.F."/>
            <person name="Fricke W.F."/>
            <person name="Gajer P."/>
            <person name="Crabtree J."/>
            <person name="Sebaihia M."/>
            <person name="Thomson N.R."/>
            <person name="Chaudhuri R."/>
            <person name="Henderson I.R."/>
            <person name="Sperandio V."/>
            <person name="Ravel J."/>
        </authorList>
    </citation>
    <scope>NUCLEOTIDE SEQUENCE [LARGE SCALE GENOMIC DNA]</scope>
    <source>
        <strain>E24377A / ETEC</strain>
    </source>
</reference>